<sequence>MSDSKCPFHHAPAEGTSNRDWWPNQLRLEILHQRSALSNPLGEEFNYAEAFKSLDLAAIKQDLTALMTDSQDWWPADFGHYGPLFIRMAWHSAGTYRTGDGRGGGGTGNQRFAPLNSWPDNVNLDKARRLLWPIKQKYGQKISWADLMILAGNVALESMGFKTFGFGGGRADIWEPEQDIYWGAEKTWLDDNRYSGDRDLENPLAAVQMGLIYVNPEGPNGNPDPVAAAKDIRETFARMAMDDEETVALIAGGHTFGKTHGAGDAANVGPEPEAAGLEEQGLGWRSSYGSGKAGDAITSGLEVTWTETPTQWSNNFFENLFGYEWELTKSPAGAHQWVPKGGAGADKIPDAHDPSKRHVPTMLTTDLSLRFDPAYEKISRRFYENPDQLADAFARAWFKLTHRDMGPRARYLGPEVPAEELIWQDPIPAVDHPLINDQDISALKSKILTSGLSVAQMVSTAWASASTFRGSDMRGGANGARIRLAPQNEWEVNQPDQLAQVLKTLEGVQAEFNSAQSDGKKVSLADIIVLAGCAGVEKAAQNAGHTIKVPFSPGRMDASQEQTDIEAFEVLEPIADGFRNYMKGKYAVSPEELLVDRAQLLTLTAPEMTVLIGGMRVLNANVGQSKHGVFTQRPESLTNDFFVNLLDMGTVWKATSKEEDLFEGRDRVTGDLKWTGTRIDLVFGSNSQLRALAEVYASSDAQERFLKDFVAAWTKVMNLDRFDLA</sequence>
<gene>
    <name evidence="1" type="primary">katG</name>
    <name type="ordered locus">HCH_03207</name>
</gene>
<proteinExistence type="inferred from homology"/>
<name>KATG_HAHCH</name>
<comment type="function">
    <text evidence="1">Bifunctional enzyme with both catalase and broad-spectrum peroxidase activity.</text>
</comment>
<comment type="catalytic activity">
    <reaction evidence="1">
        <text>H2O2 + AH2 = A + 2 H2O</text>
        <dbReference type="Rhea" id="RHEA:30275"/>
        <dbReference type="ChEBI" id="CHEBI:13193"/>
        <dbReference type="ChEBI" id="CHEBI:15377"/>
        <dbReference type="ChEBI" id="CHEBI:16240"/>
        <dbReference type="ChEBI" id="CHEBI:17499"/>
        <dbReference type="EC" id="1.11.1.21"/>
    </reaction>
</comment>
<comment type="catalytic activity">
    <reaction evidence="1">
        <text>2 H2O2 = O2 + 2 H2O</text>
        <dbReference type="Rhea" id="RHEA:20309"/>
        <dbReference type="ChEBI" id="CHEBI:15377"/>
        <dbReference type="ChEBI" id="CHEBI:15379"/>
        <dbReference type="ChEBI" id="CHEBI:16240"/>
        <dbReference type="EC" id="1.11.1.21"/>
    </reaction>
</comment>
<comment type="cofactor">
    <cofactor evidence="1">
        <name>heme b</name>
        <dbReference type="ChEBI" id="CHEBI:60344"/>
    </cofactor>
    <text evidence="1">Binds 1 heme b (iron(II)-protoporphyrin IX) group per dimer.</text>
</comment>
<comment type="subunit">
    <text evidence="1">Homodimer or homotetramer.</text>
</comment>
<comment type="PTM">
    <text evidence="1">Formation of the three residue Trp-Tyr-Met cross-link is important for the catalase, but not the peroxidase activity of the enzyme.</text>
</comment>
<comment type="similarity">
    <text evidence="1">Belongs to the peroxidase family. Peroxidase/catalase subfamily.</text>
</comment>
<dbReference type="EC" id="1.11.1.21" evidence="1"/>
<dbReference type="EMBL" id="CP000155">
    <property type="protein sequence ID" value="ABC29968.1"/>
    <property type="molecule type" value="Genomic_DNA"/>
</dbReference>
<dbReference type="RefSeq" id="WP_011397037.1">
    <property type="nucleotide sequence ID" value="NC_007645.1"/>
</dbReference>
<dbReference type="SMR" id="Q2SHA6"/>
<dbReference type="STRING" id="349521.HCH_03207"/>
<dbReference type="PeroxiBase" id="2671">
    <property type="entry name" value="HchCP01"/>
</dbReference>
<dbReference type="KEGG" id="hch:HCH_03207"/>
<dbReference type="eggNOG" id="COG0376">
    <property type="taxonomic scope" value="Bacteria"/>
</dbReference>
<dbReference type="HOGENOM" id="CLU_025424_2_0_6"/>
<dbReference type="OrthoDB" id="9759743at2"/>
<dbReference type="Proteomes" id="UP000000238">
    <property type="component" value="Chromosome"/>
</dbReference>
<dbReference type="GO" id="GO:0005829">
    <property type="term" value="C:cytosol"/>
    <property type="evidence" value="ECO:0007669"/>
    <property type="project" value="TreeGrafter"/>
</dbReference>
<dbReference type="GO" id="GO:0004096">
    <property type="term" value="F:catalase activity"/>
    <property type="evidence" value="ECO:0007669"/>
    <property type="project" value="UniProtKB-UniRule"/>
</dbReference>
<dbReference type="GO" id="GO:0020037">
    <property type="term" value="F:heme binding"/>
    <property type="evidence" value="ECO:0007669"/>
    <property type="project" value="InterPro"/>
</dbReference>
<dbReference type="GO" id="GO:0046872">
    <property type="term" value="F:metal ion binding"/>
    <property type="evidence" value="ECO:0007669"/>
    <property type="project" value="UniProtKB-KW"/>
</dbReference>
<dbReference type="GO" id="GO:0070301">
    <property type="term" value="P:cellular response to hydrogen peroxide"/>
    <property type="evidence" value="ECO:0007669"/>
    <property type="project" value="TreeGrafter"/>
</dbReference>
<dbReference type="GO" id="GO:0042744">
    <property type="term" value="P:hydrogen peroxide catabolic process"/>
    <property type="evidence" value="ECO:0007669"/>
    <property type="project" value="UniProtKB-KW"/>
</dbReference>
<dbReference type="CDD" id="cd00649">
    <property type="entry name" value="catalase_peroxidase_1"/>
    <property type="match status" value="1"/>
</dbReference>
<dbReference type="CDD" id="cd08200">
    <property type="entry name" value="catalase_peroxidase_2"/>
    <property type="match status" value="1"/>
</dbReference>
<dbReference type="FunFam" id="1.10.420.10:FF:000002">
    <property type="entry name" value="Catalase-peroxidase"/>
    <property type="match status" value="1"/>
</dbReference>
<dbReference type="FunFam" id="1.10.420.10:FF:000004">
    <property type="entry name" value="Catalase-peroxidase"/>
    <property type="match status" value="1"/>
</dbReference>
<dbReference type="FunFam" id="1.10.520.10:FF:000002">
    <property type="entry name" value="Catalase-peroxidase"/>
    <property type="match status" value="1"/>
</dbReference>
<dbReference type="FunFam" id="1.10.520.10:FF:000004">
    <property type="entry name" value="Catalase-peroxidase"/>
    <property type="match status" value="1"/>
</dbReference>
<dbReference type="Gene3D" id="1.10.520.10">
    <property type="match status" value="2"/>
</dbReference>
<dbReference type="Gene3D" id="1.10.420.10">
    <property type="entry name" value="Peroxidase, domain 2"/>
    <property type="match status" value="2"/>
</dbReference>
<dbReference type="HAMAP" id="MF_01961">
    <property type="entry name" value="Catal_peroxid"/>
    <property type="match status" value="1"/>
</dbReference>
<dbReference type="InterPro" id="IPR000763">
    <property type="entry name" value="Catalase_peroxidase"/>
</dbReference>
<dbReference type="InterPro" id="IPR002016">
    <property type="entry name" value="Haem_peroxidase"/>
</dbReference>
<dbReference type="InterPro" id="IPR010255">
    <property type="entry name" value="Haem_peroxidase_sf"/>
</dbReference>
<dbReference type="InterPro" id="IPR019794">
    <property type="entry name" value="Peroxidases_AS"/>
</dbReference>
<dbReference type="InterPro" id="IPR019793">
    <property type="entry name" value="Peroxidases_heam-ligand_BS"/>
</dbReference>
<dbReference type="NCBIfam" id="TIGR00198">
    <property type="entry name" value="cat_per_HPI"/>
    <property type="match status" value="1"/>
</dbReference>
<dbReference type="NCBIfam" id="NF011635">
    <property type="entry name" value="PRK15061.1"/>
    <property type="match status" value="1"/>
</dbReference>
<dbReference type="PANTHER" id="PTHR30555:SF0">
    <property type="entry name" value="CATALASE-PEROXIDASE"/>
    <property type="match status" value="1"/>
</dbReference>
<dbReference type="PANTHER" id="PTHR30555">
    <property type="entry name" value="HYDROPEROXIDASE I, BIFUNCTIONAL CATALASE-PEROXIDASE"/>
    <property type="match status" value="1"/>
</dbReference>
<dbReference type="Pfam" id="PF00141">
    <property type="entry name" value="peroxidase"/>
    <property type="match status" value="2"/>
</dbReference>
<dbReference type="PRINTS" id="PR00460">
    <property type="entry name" value="BPEROXIDASE"/>
</dbReference>
<dbReference type="PRINTS" id="PR00458">
    <property type="entry name" value="PEROXIDASE"/>
</dbReference>
<dbReference type="SUPFAM" id="SSF48113">
    <property type="entry name" value="Heme-dependent peroxidases"/>
    <property type="match status" value="2"/>
</dbReference>
<dbReference type="PROSITE" id="PS00435">
    <property type="entry name" value="PEROXIDASE_1"/>
    <property type="match status" value="1"/>
</dbReference>
<dbReference type="PROSITE" id="PS00436">
    <property type="entry name" value="PEROXIDASE_2"/>
    <property type="match status" value="1"/>
</dbReference>
<dbReference type="PROSITE" id="PS50873">
    <property type="entry name" value="PEROXIDASE_4"/>
    <property type="match status" value="1"/>
</dbReference>
<feature type="chain" id="PRO_0000354806" description="Catalase-peroxidase">
    <location>
        <begin position="1"/>
        <end position="725"/>
    </location>
</feature>
<feature type="active site" description="Proton acceptor" evidence="1">
    <location>
        <position position="91"/>
    </location>
</feature>
<feature type="binding site" description="axial binding residue" evidence="1">
    <location>
        <position position="254"/>
    </location>
    <ligand>
        <name>heme b</name>
        <dbReference type="ChEBI" id="CHEBI:60344"/>
    </ligand>
    <ligandPart>
        <name>Fe</name>
        <dbReference type="ChEBI" id="CHEBI:18248"/>
    </ligandPart>
</feature>
<feature type="site" description="Transition state stabilizer" evidence="1">
    <location>
        <position position="87"/>
    </location>
</feature>
<feature type="cross-link" description="Tryptophyl-tyrosyl-methioninium (Trp-Tyr) (with M-239)" evidence="1">
    <location>
        <begin position="90"/>
        <end position="213"/>
    </location>
</feature>
<feature type="cross-link" description="Tryptophyl-tyrosyl-methioninium (Tyr-Met) (with W-90)" evidence="1">
    <location>
        <begin position="213"/>
        <end position="239"/>
    </location>
</feature>
<protein>
    <recommendedName>
        <fullName evidence="1">Catalase-peroxidase</fullName>
        <shortName evidence="1">CP</shortName>
        <ecNumber evidence="1">1.11.1.21</ecNumber>
    </recommendedName>
    <alternativeName>
        <fullName evidence="1">Peroxidase/catalase</fullName>
    </alternativeName>
</protein>
<keyword id="KW-0349">Heme</keyword>
<keyword id="KW-0376">Hydrogen peroxide</keyword>
<keyword id="KW-0408">Iron</keyword>
<keyword id="KW-0479">Metal-binding</keyword>
<keyword id="KW-0560">Oxidoreductase</keyword>
<keyword id="KW-0575">Peroxidase</keyword>
<keyword id="KW-1185">Reference proteome</keyword>
<evidence type="ECO:0000255" key="1">
    <source>
        <dbReference type="HAMAP-Rule" id="MF_01961"/>
    </source>
</evidence>
<reference key="1">
    <citation type="journal article" date="2005" name="Nucleic Acids Res.">
        <title>Genomic blueprint of Hahella chejuensis, a marine microbe producing an algicidal agent.</title>
        <authorList>
            <person name="Jeong H."/>
            <person name="Yim J.H."/>
            <person name="Lee C."/>
            <person name="Choi S.-H."/>
            <person name="Park Y.K."/>
            <person name="Yoon S.H."/>
            <person name="Hur C.-G."/>
            <person name="Kang H.-Y."/>
            <person name="Kim D."/>
            <person name="Lee H.H."/>
            <person name="Park K.H."/>
            <person name="Park S.-H."/>
            <person name="Park H.-S."/>
            <person name="Lee H.K."/>
            <person name="Oh T.K."/>
            <person name="Kim J.F."/>
        </authorList>
    </citation>
    <scope>NUCLEOTIDE SEQUENCE [LARGE SCALE GENOMIC DNA]</scope>
    <source>
        <strain>KCTC 2396</strain>
    </source>
</reference>
<organism>
    <name type="scientific">Hahella chejuensis (strain KCTC 2396)</name>
    <dbReference type="NCBI Taxonomy" id="349521"/>
    <lineage>
        <taxon>Bacteria</taxon>
        <taxon>Pseudomonadati</taxon>
        <taxon>Pseudomonadota</taxon>
        <taxon>Gammaproteobacteria</taxon>
        <taxon>Oceanospirillales</taxon>
        <taxon>Hahellaceae</taxon>
        <taxon>Hahella</taxon>
    </lineage>
</organism>
<accession>Q2SHA6</accession>